<protein>
    <recommendedName>
        <fullName evidence="1">Small ribosomal subunit protein uS11</fullName>
    </recommendedName>
    <alternativeName>
        <fullName evidence="2">30S ribosomal protein S11</fullName>
    </alternativeName>
</protein>
<organism>
    <name type="scientific">Dehalococcoides mccartyi (strain CBDB1)</name>
    <dbReference type="NCBI Taxonomy" id="255470"/>
    <lineage>
        <taxon>Bacteria</taxon>
        <taxon>Bacillati</taxon>
        <taxon>Chloroflexota</taxon>
        <taxon>Dehalococcoidia</taxon>
        <taxon>Dehalococcoidales</taxon>
        <taxon>Dehalococcoidaceae</taxon>
        <taxon>Dehalococcoides</taxon>
    </lineage>
</organism>
<proteinExistence type="inferred from homology"/>
<keyword id="KW-0687">Ribonucleoprotein</keyword>
<keyword id="KW-0689">Ribosomal protein</keyword>
<keyword id="KW-0694">RNA-binding</keyword>
<keyword id="KW-0699">rRNA-binding</keyword>
<sequence length="130" mass="13724">MAVKKRAGAKKKEKKVIPVGKAYVQATFNNTIVTLTDLQGNVIAWASCGTAGFKGSRKGTPYAAQMAAQTAARKAAESGLRQVEVLVKGPGSGREAAIRSLQASGINVTAIRDVTPIPHNGCRPPKRRRV</sequence>
<dbReference type="EMBL" id="AJ965256">
    <property type="protein sequence ID" value="CAI82665.1"/>
    <property type="molecule type" value="Genomic_DNA"/>
</dbReference>
<dbReference type="RefSeq" id="WP_011309018.1">
    <property type="nucleotide sequence ID" value="NC_007356.1"/>
</dbReference>
<dbReference type="SMR" id="Q3ZZP8"/>
<dbReference type="KEGG" id="deh:cbdbA464"/>
<dbReference type="HOGENOM" id="CLU_072439_5_0_0"/>
<dbReference type="Proteomes" id="UP000000433">
    <property type="component" value="Chromosome"/>
</dbReference>
<dbReference type="GO" id="GO:1990904">
    <property type="term" value="C:ribonucleoprotein complex"/>
    <property type="evidence" value="ECO:0007669"/>
    <property type="project" value="UniProtKB-KW"/>
</dbReference>
<dbReference type="GO" id="GO:0005840">
    <property type="term" value="C:ribosome"/>
    <property type="evidence" value="ECO:0007669"/>
    <property type="project" value="UniProtKB-KW"/>
</dbReference>
<dbReference type="GO" id="GO:0019843">
    <property type="term" value="F:rRNA binding"/>
    <property type="evidence" value="ECO:0007669"/>
    <property type="project" value="UniProtKB-UniRule"/>
</dbReference>
<dbReference type="GO" id="GO:0003735">
    <property type="term" value="F:structural constituent of ribosome"/>
    <property type="evidence" value="ECO:0007669"/>
    <property type="project" value="InterPro"/>
</dbReference>
<dbReference type="GO" id="GO:0006412">
    <property type="term" value="P:translation"/>
    <property type="evidence" value="ECO:0007669"/>
    <property type="project" value="UniProtKB-UniRule"/>
</dbReference>
<dbReference type="FunFam" id="3.30.420.80:FF:000001">
    <property type="entry name" value="30S ribosomal protein S11"/>
    <property type="match status" value="1"/>
</dbReference>
<dbReference type="Gene3D" id="3.30.420.80">
    <property type="entry name" value="Ribosomal protein S11"/>
    <property type="match status" value="1"/>
</dbReference>
<dbReference type="HAMAP" id="MF_01310">
    <property type="entry name" value="Ribosomal_uS11"/>
    <property type="match status" value="1"/>
</dbReference>
<dbReference type="InterPro" id="IPR001971">
    <property type="entry name" value="Ribosomal_uS11"/>
</dbReference>
<dbReference type="InterPro" id="IPR019981">
    <property type="entry name" value="Ribosomal_uS11_bac-type"/>
</dbReference>
<dbReference type="InterPro" id="IPR018102">
    <property type="entry name" value="Ribosomal_uS11_CS"/>
</dbReference>
<dbReference type="InterPro" id="IPR036967">
    <property type="entry name" value="Ribosomal_uS11_sf"/>
</dbReference>
<dbReference type="NCBIfam" id="NF003698">
    <property type="entry name" value="PRK05309.1"/>
    <property type="match status" value="1"/>
</dbReference>
<dbReference type="NCBIfam" id="TIGR03632">
    <property type="entry name" value="uS11_bact"/>
    <property type="match status" value="1"/>
</dbReference>
<dbReference type="PANTHER" id="PTHR11759">
    <property type="entry name" value="40S RIBOSOMAL PROTEIN S14/30S RIBOSOMAL PROTEIN S11"/>
    <property type="match status" value="1"/>
</dbReference>
<dbReference type="Pfam" id="PF00411">
    <property type="entry name" value="Ribosomal_S11"/>
    <property type="match status" value="1"/>
</dbReference>
<dbReference type="PIRSF" id="PIRSF002131">
    <property type="entry name" value="Ribosomal_S11"/>
    <property type="match status" value="1"/>
</dbReference>
<dbReference type="SUPFAM" id="SSF53137">
    <property type="entry name" value="Translational machinery components"/>
    <property type="match status" value="1"/>
</dbReference>
<dbReference type="PROSITE" id="PS00054">
    <property type="entry name" value="RIBOSOMAL_S11"/>
    <property type="match status" value="1"/>
</dbReference>
<comment type="function">
    <text evidence="1">Located on the platform of the 30S subunit, it bridges several disparate RNA helices of the 16S rRNA. Forms part of the Shine-Dalgarno cleft in the 70S ribosome.</text>
</comment>
<comment type="subunit">
    <text evidence="1">Part of the 30S ribosomal subunit. Interacts with proteins S7 and S18. Binds to IF-3.</text>
</comment>
<comment type="similarity">
    <text evidence="1">Belongs to the universal ribosomal protein uS11 family.</text>
</comment>
<evidence type="ECO:0000255" key="1">
    <source>
        <dbReference type="HAMAP-Rule" id="MF_01310"/>
    </source>
</evidence>
<evidence type="ECO:0000305" key="2"/>
<reference key="1">
    <citation type="journal article" date="2005" name="Nat. Biotechnol.">
        <title>Genome sequence of the chlorinated compound-respiring bacterium Dehalococcoides species strain CBDB1.</title>
        <authorList>
            <person name="Kube M."/>
            <person name="Beck A."/>
            <person name="Zinder S.H."/>
            <person name="Kuhl H."/>
            <person name="Reinhardt R."/>
            <person name="Adrian L."/>
        </authorList>
    </citation>
    <scope>NUCLEOTIDE SEQUENCE [LARGE SCALE GENOMIC DNA]</scope>
    <source>
        <strain>CBDB1</strain>
    </source>
</reference>
<accession>Q3ZZP8</accession>
<feature type="chain" id="PRO_0000230401" description="Small ribosomal subunit protein uS11">
    <location>
        <begin position="1"/>
        <end position="130"/>
    </location>
</feature>
<name>RS11_DEHMC</name>
<gene>
    <name evidence="1" type="primary">rpsK</name>
    <name type="ordered locus">cbdbA464</name>
</gene>